<gene>
    <name evidence="1" type="primary">folE2</name>
    <name type="ordered locus">Ppro_3275</name>
</gene>
<keyword id="KW-0378">Hydrolase</keyword>
<keyword id="KW-1185">Reference proteome</keyword>
<protein>
    <recommendedName>
        <fullName evidence="1">GTP cyclohydrolase FolE2</fullName>
        <ecNumber evidence="1">3.5.4.16</ecNumber>
    </recommendedName>
</protein>
<organism>
    <name type="scientific">Pelobacter propionicus (strain DSM 2379 / NBRC 103807 / OttBd1)</name>
    <dbReference type="NCBI Taxonomy" id="338966"/>
    <lineage>
        <taxon>Bacteria</taxon>
        <taxon>Pseudomonadati</taxon>
        <taxon>Thermodesulfobacteriota</taxon>
        <taxon>Desulfuromonadia</taxon>
        <taxon>Desulfuromonadales</taxon>
        <taxon>Desulfuromonadaceae</taxon>
        <taxon>Pelobacter</taxon>
    </lineage>
</organism>
<evidence type="ECO:0000255" key="1">
    <source>
        <dbReference type="HAMAP-Rule" id="MF_01527"/>
    </source>
</evidence>
<evidence type="ECO:0000305" key="2"/>
<feature type="chain" id="PRO_0000292755" description="GTP cyclohydrolase FolE2">
    <location>
        <begin position="1"/>
        <end position="257"/>
    </location>
</feature>
<feature type="site" description="May be catalytically important" evidence="1">
    <location>
        <position position="144"/>
    </location>
</feature>
<name>GCH4_PELPD</name>
<proteinExistence type="inferred from homology"/>
<reference key="1">
    <citation type="submission" date="2006-10" db="EMBL/GenBank/DDBJ databases">
        <title>Complete sequence of chromosome of Pelobacter propionicus DSM 2379.</title>
        <authorList>
            <consortium name="US DOE Joint Genome Institute"/>
            <person name="Copeland A."/>
            <person name="Lucas S."/>
            <person name="Lapidus A."/>
            <person name="Barry K."/>
            <person name="Detter J.C."/>
            <person name="Glavina del Rio T."/>
            <person name="Hammon N."/>
            <person name="Israni S."/>
            <person name="Dalin E."/>
            <person name="Tice H."/>
            <person name="Pitluck S."/>
            <person name="Saunders E."/>
            <person name="Brettin T."/>
            <person name="Bruce D."/>
            <person name="Han C."/>
            <person name="Tapia R."/>
            <person name="Schmutz J."/>
            <person name="Larimer F."/>
            <person name="Land M."/>
            <person name="Hauser L."/>
            <person name="Kyrpides N."/>
            <person name="Kim E."/>
            <person name="Lovley D."/>
            <person name="Richardson P."/>
        </authorList>
    </citation>
    <scope>NUCLEOTIDE SEQUENCE [LARGE SCALE GENOMIC DNA]</scope>
    <source>
        <strain>DSM 2379 / NBRC 103807 / OttBd1</strain>
    </source>
</reference>
<accession>A1AU47</accession>
<dbReference type="EC" id="3.5.4.16" evidence="1"/>
<dbReference type="EMBL" id="CP000482">
    <property type="protein sequence ID" value="ABL00868.1"/>
    <property type="status" value="ALT_INIT"/>
    <property type="molecule type" value="Genomic_DNA"/>
</dbReference>
<dbReference type="RefSeq" id="WP_041532924.1">
    <property type="nucleotide sequence ID" value="NC_008609.1"/>
</dbReference>
<dbReference type="SMR" id="A1AU47"/>
<dbReference type="STRING" id="338966.Ppro_3275"/>
<dbReference type="KEGG" id="ppd:Ppro_3275"/>
<dbReference type="eggNOG" id="COG1469">
    <property type="taxonomic scope" value="Bacteria"/>
</dbReference>
<dbReference type="HOGENOM" id="CLU_062816_1_1_7"/>
<dbReference type="OrthoDB" id="9774824at2"/>
<dbReference type="UniPathway" id="UPA00848">
    <property type="reaction ID" value="UER00151"/>
</dbReference>
<dbReference type="Proteomes" id="UP000006732">
    <property type="component" value="Chromosome"/>
</dbReference>
<dbReference type="GO" id="GO:0003934">
    <property type="term" value="F:GTP cyclohydrolase I activity"/>
    <property type="evidence" value="ECO:0007669"/>
    <property type="project" value="UniProtKB-UniRule"/>
</dbReference>
<dbReference type="GO" id="GO:0046654">
    <property type="term" value="P:tetrahydrofolate biosynthetic process"/>
    <property type="evidence" value="ECO:0007669"/>
    <property type="project" value="UniProtKB-UniRule"/>
</dbReference>
<dbReference type="Gene3D" id="3.10.270.10">
    <property type="entry name" value="Urate Oxidase"/>
    <property type="match status" value="1"/>
</dbReference>
<dbReference type="HAMAP" id="MF_01527_B">
    <property type="entry name" value="GTP_cyclohydrol_B"/>
    <property type="match status" value="1"/>
</dbReference>
<dbReference type="InterPro" id="IPR022838">
    <property type="entry name" value="GTP_cyclohydrolase_FolE2"/>
</dbReference>
<dbReference type="InterPro" id="IPR003801">
    <property type="entry name" value="GTP_cyclohydrolase_FolE2/MptA"/>
</dbReference>
<dbReference type="NCBIfam" id="NF010200">
    <property type="entry name" value="PRK13674.1-1"/>
    <property type="match status" value="1"/>
</dbReference>
<dbReference type="PANTHER" id="PTHR36445">
    <property type="entry name" value="GTP CYCLOHYDROLASE MPTA"/>
    <property type="match status" value="1"/>
</dbReference>
<dbReference type="PANTHER" id="PTHR36445:SF1">
    <property type="entry name" value="GTP CYCLOHYDROLASE MPTA"/>
    <property type="match status" value="1"/>
</dbReference>
<dbReference type="Pfam" id="PF02649">
    <property type="entry name" value="GCHY-1"/>
    <property type="match status" value="1"/>
</dbReference>
<sequence>MPDMQKRPDHRRIPISKVGVKDISYPIVVMDKNRSLQHTVARVNMYVDLPHQFKGTHMSRFVEILNRHREQIALDKLETILEEMKARLGSASAHLEIQFPYFIDKRAPVSGARSLMEYSCEFSASLTDTLDFVLGVRVPLTSLCPCSRELAIHGAHNQRSIMTVRVRYRDFIWIEDLVELIEQCGSSPLYSLLKRVDEKYVTEQAYENPRFVEDMVREAYSRLAGMENITWFSVETENFESIHNHSAYAAVELDRRG</sequence>
<comment type="function">
    <text evidence="1">Converts GTP to 7,8-dihydroneopterin triphosphate.</text>
</comment>
<comment type="catalytic activity">
    <reaction evidence="1">
        <text>GTP + H2O = 7,8-dihydroneopterin 3'-triphosphate + formate + H(+)</text>
        <dbReference type="Rhea" id="RHEA:17473"/>
        <dbReference type="ChEBI" id="CHEBI:15377"/>
        <dbReference type="ChEBI" id="CHEBI:15378"/>
        <dbReference type="ChEBI" id="CHEBI:15740"/>
        <dbReference type="ChEBI" id="CHEBI:37565"/>
        <dbReference type="ChEBI" id="CHEBI:58462"/>
        <dbReference type="EC" id="3.5.4.16"/>
    </reaction>
</comment>
<comment type="pathway">
    <text evidence="1">Cofactor biosynthesis; 7,8-dihydroneopterin triphosphate biosynthesis; 7,8-dihydroneopterin triphosphate from GTP: step 1/1.</text>
</comment>
<comment type="similarity">
    <text evidence="1">Belongs to the GTP cyclohydrolase IV family.</text>
</comment>
<comment type="sequence caution" evidence="2">
    <conflict type="erroneous initiation">
        <sequence resource="EMBL-CDS" id="ABL00868"/>
    </conflict>
</comment>